<comment type="function">
    <text evidence="1">Participates in the translocation of lipoproteins from the inner membrane to the outer membrane. Only forms a complex with a lipoprotein if the residue after the N-terminal Cys is not an aspartate (The Asp acts as a targeting signal to indicate that the lipoprotein should stay in the inner membrane).</text>
</comment>
<comment type="subunit">
    <text evidence="1">Monomer.</text>
</comment>
<comment type="subcellular location">
    <subcellularLocation>
        <location evidence="1">Periplasm</location>
    </subcellularLocation>
</comment>
<comment type="similarity">
    <text evidence="1">Belongs to the LolA family.</text>
</comment>
<sequence length="204" mass="23400">MKKYLNLTALLLVGISNVTWANAVNELQNRLNKIDVLSADYTQQVTDAQGKKIQQGSGKIQLKRPNLFRMDNETPQESQIIADGKTLWFYDPFVEQVTANWVEDTLSDTPFVLLTSNNPSHWQQYIVEQKSDTFIIKPKSKKSTIKQFNIRIEKDGVLKNFSTIENDGQSNLYILRKITNPALNDAIFTFTLPKGVEFDDQRKK</sequence>
<dbReference type="EMBL" id="CP000436">
    <property type="protein sequence ID" value="ABI25089.1"/>
    <property type="molecule type" value="Genomic_DNA"/>
</dbReference>
<dbReference type="SMR" id="Q0I3Q2"/>
<dbReference type="KEGG" id="hso:HS_0814"/>
<dbReference type="eggNOG" id="COG2834">
    <property type="taxonomic scope" value="Bacteria"/>
</dbReference>
<dbReference type="HOGENOM" id="CLU_087560_1_1_6"/>
<dbReference type="GO" id="GO:0030288">
    <property type="term" value="C:outer membrane-bounded periplasmic space"/>
    <property type="evidence" value="ECO:0007669"/>
    <property type="project" value="TreeGrafter"/>
</dbReference>
<dbReference type="GO" id="GO:0044874">
    <property type="term" value="P:lipoprotein localization to outer membrane"/>
    <property type="evidence" value="ECO:0007669"/>
    <property type="project" value="UniProtKB-UniRule"/>
</dbReference>
<dbReference type="GO" id="GO:0042953">
    <property type="term" value="P:lipoprotein transport"/>
    <property type="evidence" value="ECO:0007669"/>
    <property type="project" value="InterPro"/>
</dbReference>
<dbReference type="CDD" id="cd16325">
    <property type="entry name" value="LolA"/>
    <property type="match status" value="1"/>
</dbReference>
<dbReference type="Gene3D" id="2.50.20.10">
    <property type="entry name" value="Lipoprotein localisation LolA/LolB/LppX"/>
    <property type="match status" value="1"/>
</dbReference>
<dbReference type="HAMAP" id="MF_00240">
    <property type="entry name" value="LolA"/>
    <property type="match status" value="1"/>
</dbReference>
<dbReference type="InterPro" id="IPR029046">
    <property type="entry name" value="LolA/LolB/LppX"/>
</dbReference>
<dbReference type="InterPro" id="IPR004564">
    <property type="entry name" value="OM_lipoprot_carrier_LolA-like"/>
</dbReference>
<dbReference type="InterPro" id="IPR018323">
    <property type="entry name" value="OM_lipoprot_carrier_LolA_Pbac"/>
</dbReference>
<dbReference type="NCBIfam" id="TIGR00547">
    <property type="entry name" value="lolA"/>
    <property type="match status" value="1"/>
</dbReference>
<dbReference type="PANTHER" id="PTHR35869">
    <property type="entry name" value="OUTER-MEMBRANE LIPOPROTEIN CARRIER PROTEIN"/>
    <property type="match status" value="1"/>
</dbReference>
<dbReference type="PANTHER" id="PTHR35869:SF1">
    <property type="entry name" value="OUTER-MEMBRANE LIPOPROTEIN CARRIER PROTEIN"/>
    <property type="match status" value="1"/>
</dbReference>
<dbReference type="Pfam" id="PF03548">
    <property type="entry name" value="LolA"/>
    <property type="match status" value="1"/>
</dbReference>
<dbReference type="SUPFAM" id="SSF89392">
    <property type="entry name" value="Prokaryotic lipoproteins and lipoprotein localization factors"/>
    <property type="match status" value="1"/>
</dbReference>
<evidence type="ECO:0000255" key="1">
    <source>
        <dbReference type="HAMAP-Rule" id="MF_00240"/>
    </source>
</evidence>
<protein>
    <recommendedName>
        <fullName evidence="1">Outer-membrane lipoprotein carrier protein</fullName>
    </recommendedName>
</protein>
<gene>
    <name evidence="1" type="primary">lolA</name>
    <name type="ordered locus">HS_0814</name>
</gene>
<organism>
    <name type="scientific">Histophilus somni (strain 129Pt)</name>
    <name type="common">Haemophilus somnus</name>
    <dbReference type="NCBI Taxonomy" id="205914"/>
    <lineage>
        <taxon>Bacteria</taxon>
        <taxon>Pseudomonadati</taxon>
        <taxon>Pseudomonadota</taxon>
        <taxon>Gammaproteobacteria</taxon>
        <taxon>Pasteurellales</taxon>
        <taxon>Pasteurellaceae</taxon>
        <taxon>Histophilus</taxon>
    </lineage>
</organism>
<name>LOLA_HISS1</name>
<keyword id="KW-0143">Chaperone</keyword>
<keyword id="KW-0574">Periplasm</keyword>
<keyword id="KW-0653">Protein transport</keyword>
<keyword id="KW-0732">Signal</keyword>
<keyword id="KW-0813">Transport</keyword>
<reference key="1">
    <citation type="journal article" date="2007" name="J. Bacteriol.">
        <title>Complete genome sequence of Haemophilus somnus (Histophilus somni) strain 129Pt and comparison to Haemophilus ducreyi 35000HP and Haemophilus influenzae Rd.</title>
        <authorList>
            <person name="Challacombe J.F."/>
            <person name="Duncan A.J."/>
            <person name="Brettin T.S."/>
            <person name="Bruce D."/>
            <person name="Chertkov O."/>
            <person name="Detter J.C."/>
            <person name="Han C.S."/>
            <person name="Misra M."/>
            <person name="Richardson P."/>
            <person name="Tapia R."/>
            <person name="Thayer N."/>
            <person name="Xie G."/>
            <person name="Inzana T.J."/>
        </authorList>
    </citation>
    <scope>NUCLEOTIDE SEQUENCE [LARGE SCALE GENOMIC DNA]</scope>
    <source>
        <strain>129Pt</strain>
    </source>
</reference>
<proteinExistence type="inferred from homology"/>
<feature type="signal peptide" evidence="1">
    <location>
        <begin position="1"/>
        <end position="21"/>
    </location>
</feature>
<feature type="chain" id="PRO_0000336653" description="Outer-membrane lipoprotein carrier protein">
    <location>
        <begin position="22"/>
        <end position="204"/>
    </location>
</feature>
<accession>Q0I3Q2</accession>